<keyword id="KW-0963">Cytoplasm</keyword>
<keyword id="KW-0269">Exonuclease</keyword>
<keyword id="KW-0378">Hydrolase</keyword>
<keyword id="KW-0540">Nuclease</keyword>
<keyword id="KW-1185">Reference proteome</keyword>
<protein>
    <recommendedName>
        <fullName evidence="1">Exodeoxyribonuclease 7 large subunit</fullName>
        <ecNumber evidence="1">3.1.11.6</ecNumber>
    </recommendedName>
    <alternativeName>
        <fullName evidence="1">Exodeoxyribonuclease VII large subunit</fullName>
        <shortName evidence="1">Exonuclease VII large subunit</shortName>
    </alternativeName>
</protein>
<sequence>MSADRVPTYSVGELNTAIGSLLERGFAPRFLLEATVSRPQVKKGHLWLTLTDGTASISGVVWASRLAQLSYRPTDGDGVTVVGKLNFWAARASITVQALDIRPSLSTVLRQFEQVRQRLEDEGVINPGRQRSLPSQPATLALLTSVPSSALADMLRTGRERWPMTRLLVIPIPVQGAVADQIIKVLNRLAERCEALAVDGLVLARGGGSREDLAVFDDEALCRCLAQFPRPVVTGIGHEDDLTIADLVADHRAATPTAAMVACLPDRDSAKRNLQDRRQRMKDVVGWRIERDRQRLNDRRAFLRQQSPLRRLQQLQDDLNRKRDLLRALSPSRWLQRGLALLSNDAGETLSGVTSIKVGDRVVIQMNDGELDTDVKVVRPSSHQSMS</sequence>
<evidence type="ECO:0000255" key="1">
    <source>
        <dbReference type="HAMAP-Rule" id="MF_00378"/>
    </source>
</evidence>
<accession>Q3AZZ0</accession>
<reference key="1">
    <citation type="submission" date="2005-08" db="EMBL/GenBank/DDBJ databases">
        <title>Complete sequence of Synechococcus sp. CC9902.</title>
        <authorList>
            <person name="Copeland A."/>
            <person name="Lucas S."/>
            <person name="Lapidus A."/>
            <person name="Barry K."/>
            <person name="Detter J.C."/>
            <person name="Glavina T."/>
            <person name="Hammon N."/>
            <person name="Israni S."/>
            <person name="Pitluck S."/>
            <person name="Martinez M."/>
            <person name="Schmutz J."/>
            <person name="Larimer F."/>
            <person name="Land M."/>
            <person name="Kyrpides N."/>
            <person name="Ivanova N."/>
            <person name="Richardson P."/>
        </authorList>
    </citation>
    <scope>NUCLEOTIDE SEQUENCE [LARGE SCALE GENOMIC DNA]</scope>
    <source>
        <strain>CC9902</strain>
    </source>
</reference>
<comment type="function">
    <text evidence="1">Bidirectionally degrades single-stranded DNA into large acid-insoluble oligonucleotides, which are then degraded further into small acid-soluble oligonucleotides.</text>
</comment>
<comment type="catalytic activity">
    <reaction evidence="1">
        <text>Exonucleolytic cleavage in either 5'- to 3'- or 3'- to 5'-direction to yield nucleoside 5'-phosphates.</text>
        <dbReference type="EC" id="3.1.11.6"/>
    </reaction>
</comment>
<comment type="subunit">
    <text evidence="1">Heterooligomer composed of large and small subunits.</text>
</comment>
<comment type="subcellular location">
    <subcellularLocation>
        <location evidence="1">Cytoplasm</location>
    </subcellularLocation>
</comment>
<comment type="similarity">
    <text evidence="1">Belongs to the XseA family.</text>
</comment>
<name>EX7L_SYNS9</name>
<organism>
    <name type="scientific">Synechococcus sp. (strain CC9902)</name>
    <dbReference type="NCBI Taxonomy" id="316279"/>
    <lineage>
        <taxon>Bacteria</taxon>
        <taxon>Bacillati</taxon>
        <taxon>Cyanobacteriota</taxon>
        <taxon>Cyanophyceae</taxon>
        <taxon>Synechococcales</taxon>
        <taxon>Synechococcaceae</taxon>
        <taxon>Synechococcus</taxon>
    </lineage>
</organism>
<dbReference type="EC" id="3.1.11.6" evidence="1"/>
<dbReference type="EMBL" id="CP000097">
    <property type="protein sequence ID" value="ABB25337.1"/>
    <property type="molecule type" value="Genomic_DNA"/>
</dbReference>
<dbReference type="RefSeq" id="WP_011359194.1">
    <property type="nucleotide sequence ID" value="NC_007513.1"/>
</dbReference>
<dbReference type="SMR" id="Q3AZZ0"/>
<dbReference type="STRING" id="316279.Syncc9902_0367"/>
<dbReference type="KEGG" id="sye:Syncc9902_0367"/>
<dbReference type="eggNOG" id="COG1570">
    <property type="taxonomic scope" value="Bacteria"/>
</dbReference>
<dbReference type="HOGENOM" id="CLU_023625_2_1_3"/>
<dbReference type="OrthoDB" id="9802795at2"/>
<dbReference type="Proteomes" id="UP000002712">
    <property type="component" value="Chromosome"/>
</dbReference>
<dbReference type="GO" id="GO:0005737">
    <property type="term" value="C:cytoplasm"/>
    <property type="evidence" value="ECO:0007669"/>
    <property type="project" value="UniProtKB-SubCell"/>
</dbReference>
<dbReference type="GO" id="GO:0009318">
    <property type="term" value="C:exodeoxyribonuclease VII complex"/>
    <property type="evidence" value="ECO:0007669"/>
    <property type="project" value="InterPro"/>
</dbReference>
<dbReference type="GO" id="GO:0008855">
    <property type="term" value="F:exodeoxyribonuclease VII activity"/>
    <property type="evidence" value="ECO:0007669"/>
    <property type="project" value="UniProtKB-UniRule"/>
</dbReference>
<dbReference type="GO" id="GO:0003676">
    <property type="term" value="F:nucleic acid binding"/>
    <property type="evidence" value="ECO:0007669"/>
    <property type="project" value="InterPro"/>
</dbReference>
<dbReference type="GO" id="GO:0006308">
    <property type="term" value="P:DNA catabolic process"/>
    <property type="evidence" value="ECO:0007669"/>
    <property type="project" value="UniProtKB-UniRule"/>
</dbReference>
<dbReference type="CDD" id="cd04489">
    <property type="entry name" value="ExoVII_LU_OBF"/>
    <property type="match status" value="1"/>
</dbReference>
<dbReference type="HAMAP" id="MF_00378">
    <property type="entry name" value="Exonuc_7_L"/>
    <property type="match status" value="1"/>
</dbReference>
<dbReference type="InterPro" id="IPR003753">
    <property type="entry name" value="Exonuc_VII_L"/>
</dbReference>
<dbReference type="InterPro" id="IPR020579">
    <property type="entry name" value="Exonuc_VII_lsu_C"/>
</dbReference>
<dbReference type="InterPro" id="IPR025824">
    <property type="entry name" value="OB-fold_nuc-bd_dom"/>
</dbReference>
<dbReference type="NCBIfam" id="TIGR00237">
    <property type="entry name" value="xseA"/>
    <property type="match status" value="1"/>
</dbReference>
<dbReference type="PANTHER" id="PTHR30008">
    <property type="entry name" value="EXODEOXYRIBONUCLEASE 7 LARGE SUBUNIT"/>
    <property type="match status" value="1"/>
</dbReference>
<dbReference type="PANTHER" id="PTHR30008:SF0">
    <property type="entry name" value="EXODEOXYRIBONUCLEASE 7 LARGE SUBUNIT"/>
    <property type="match status" value="1"/>
</dbReference>
<dbReference type="Pfam" id="PF02601">
    <property type="entry name" value="Exonuc_VII_L"/>
    <property type="match status" value="1"/>
</dbReference>
<dbReference type="Pfam" id="PF13742">
    <property type="entry name" value="tRNA_anti_2"/>
    <property type="match status" value="1"/>
</dbReference>
<proteinExistence type="inferred from homology"/>
<feature type="chain" id="PRO_0000303830" description="Exodeoxyribonuclease 7 large subunit">
    <location>
        <begin position="1"/>
        <end position="387"/>
    </location>
</feature>
<gene>
    <name evidence="1" type="primary">xseA</name>
    <name type="ordered locus">Syncc9902_0367</name>
</gene>